<sequence length="147" mass="16493">MSMSTSTEVIAHHWAFAIFLIVAIGLCCLMLVGGWFLGGRARARHKNVPFESGIDSVGTARLRLSAKFYLVAMFFVIFDVEALYLFAWSTSIRESGWVGFVEAAIFIFVLLAGLVYLARIGALDWTPARSRRERMNPETNSIANRQR</sequence>
<protein>
    <recommendedName>
        <fullName evidence="1">NADH-quinone oxidoreductase subunit A</fullName>
        <ecNumber evidence="1">7.1.1.-</ecNumber>
    </recommendedName>
    <alternativeName>
        <fullName evidence="1">NADH dehydrogenase I subunit A</fullName>
    </alternativeName>
    <alternativeName>
        <fullName evidence="1">NDH-1 subunit A</fullName>
    </alternativeName>
    <alternativeName>
        <fullName evidence="1">NUO1</fullName>
    </alternativeName>
</protein>
<accession>Q57M28</accession>
<proteinExistence type="inferred from homology"/>
<organism>
    <name type="scientific">Salmonella choleraesuis (strain SC-B67)</name>
    <dbReference type="NCBI Taxonomy" id="321314"/>
    <lineage>
        <taxon>Bacteria</taxon>
        <taxon>Pseudomonadati</taxon>
        <taxon>Pseudomonadota</taxon>
        <taxon>Gammaproteobacteria</taxon>
        <taxon>Enterobacterales</taxon>
        <taxon>Enterobacteriaceae</taxon>
        <taxon>Salmonella</taxon>
    </lineage>
</organism>
<reference key="1">
    <citation type="journal article" date="2005" name="Nucleic Acids Res.">
        <title>The genome sequence of Salmonella enterica serovar Choleraesuis, a highly invasive and resistant zoonotic pathogen.</title>
        <authorList>
            <person name="Chiu C.-H."/>
            <person name="Tang P."/>
            <person name="Chu C."/>
            <person name="Hu S."/>
            <person name="Bao Q."/>
            <person name="Yu J."/>
            <person name="Chou Y.-Y."/>
            <person name="Wang H.-S."/>
            <person name="Lee Y.-S."/>
        </authorList>
    </citation>
    <scope>NUCLEOTIDE SEQUENCE [LARGE SCALE GENOMIC DNA]</scope>
    <source>
        <strain>SC-B67</strain>
    </source>
</reference>
<evidence type="ECO:0000255" key="1">
    <source>
        <dbReference type="HAMAP-Rule" id="MF_01394"/>
    </source>
</evidence>
<gene>
    <name evidence="1" type="primary">nuoA</name>
    <name type="ordered locus">SCH_2328</name>
</gene>
<dbReference type="EC" id="7.1.1.-" evidence="1"/>
<dbReference type="EMBL" id="AE017220">
    <property type="protein sequence ID" value="AAX66234.1"/>
    <property type="molecule type" value="Genomic_DNA"/>
</dbReference>
<dbReference type="RefSeq" id="WP_000062993.1">
    <property type="nucleotide sequence ID" value="NC_006905.1"/>
</dbReference>
<dbReference type="SMR" id="Q57M28"/>
<dbReference type="GeneID" id="66756777"/>
<dbReference type="KEGG" id="sec:SCH_2328"/>
<dbReference type="HOGENOM" id="CLU_119549_2_0_6"/>
<dbReference type="Proteomes" id="UP000000538">
    <property type="component" value="Chromosome"/>
</dbReference>
<dbReference type="GO" id="GO:0030964">
    <property type="term" value="C:NADH dehydrogenase complex"/>
    <property type="evidence" value="ECO:0007669"/>
    <property type="project" value="TreeGrafter"/>
</dbReference>
<dbReference type="GO" id="GO:0005886">
    <property type="term" value="C:plasma membrane"/>
    <property type="evidence" value="ECO:0007669"/>
    <property type="project" value="UniProtKB-SubCell"/>
</dbReference>
<dbReference type="GO" id="GO:0008137">
    <property type="term" value="F:NADH dehydrogenase (ubiquinone) activity"/>
    <property type="evidence" value="ECO:0007669"/>
    <property type="project" value="InterPro"/>
</dbReference>
<dbReference type="GO" id="GO:0050136">
    <property type="term" value="F:NADH:ubiquinone reductase (non-electrogenic) activity"/>
    <property type="evidence" value="ECO:0007669"/>
    <property type="project" value="UniProtKB-UniRule"/>
</dbReference>
<dbReference type="GO" id="GO:0048038">
    <property type="term" value="F:quinone binding"/>
    <property type="evidence" value="ECO:0007669"/>
    <property type="project" value="UniProtKB-KW"/>
</dbReference>
<dbReference type="FunFam" id="1.20.58.1610:FF:000003">
    <property type="entry name" value="NADH-quinone oxidoreductase subunit A"/>
    <property type="match status" value="1"/>
</dbReference>
<dbReference type="Gene3D" id="1.20.58.1610">
    <property type="entry name" value="NADH:ubiquinone/plastoquinone oxidoreductase, chain 3"/>
    <property type="match status" value="1"/>
</dbReference>
<dbReference type="HAMAP" id="MF_01394">
    <property type="entry name" value="NDH1_NuoA"/>
    <property type="match status" value="1"/>
</dbReference>
<dbReference type="InterPro" id="IPR023043">
    <property type="entry name" value="NAD(P)H_OxRDtase_bac/plastid"/>
</dbReference>
<dbReference type="InterPro" id="IPR000440">
    <property type="entry name" value="NADH_UbQ/plastoQ_OxRdtase_su3"/>
</dbReference>
<dbReference type="InterPro" id="IPR038430">
    <property type="entry name" value="NDAH_ubi_oxred_su3_sf"/>
</dbReference>
<dbReference type="PANTHER" id="PTHR11058:SF21">
    <property type="entry name" value="NADH-QUINONE OXIDOREDUCTASE SUBUNIT A"/>
    <property type="match status" value="1"/>
</dbReference>
<dbReference type="PANTHER" id="PTHR11058">
    <property type="entry name" value="NADH-UBIQUINONE OXIDOREDUCTASE CHAIN 3"/>
    <property type="match status" value="1"/>
</dbReference>
<dbReference type="Pfam" id="PF00507">
    <property type="entry name" value="Oxidored_q4"/>
    <property type="match status" value="1"/>
</dbReference>
<feature type="chain" id="PRO_0000362765" description="NADH-quinone oxidoreductase subunit A">
    <location>
        <begin position="1"/>
        <end position="147"/>
    </location>
</feature>
<feature type="transmembrane region" description="Helical" evidence="1">
    <location>
        <begin position="16"/>
        <end position="36"/>
    </location>
</feature>
<feature type="transmembrane region" description="Helical" evidence="1">
    <location>
        <begin position="68"/>
        <end position="88"/>
    </location>
</feature>
<feature type="transmembrane region" description="Helical" evidence="1">
    <location>
        <begin position="97"/>
        <end position="117"/>
    </location>
</feature>
<name>NUOA_SALCH</name>
<keyword id="KW-0997">Cell inner membrane</keyword>
<keyword id="KW-1003">Cell membrane</keyword>
<keyword id="KW-0472">Membrane</keyword>
<keyword id="KW-0520">NAD</keyword>
<keyword id="KW-0874">Quinone</keyword>
<keyword id="KW-1278">Translocase</keyword>
<keyword id="KW-0812">Transmembrane</keyword>
<keyword id="KW-1133">Transmembrane helix</keyword>
<keyword id="KW-0813">Transport</keyword>
<keyword id="KW-0830">Ubiquinone</keyword>
<comment type="function">
    <text evidence="1">NDH-1 shuttles electrons from NADH, via FMN and iron-sulfur (Fe-S) centers, to quinones in the respiratory chain. The immediate electron acceptor for the enzyme in this species is believed to be ubiquinone. Couples the redox reaction to proton translocation (for every two electrons transferred, four hydrogen ions are translocated across the cytoplasmic membrane), and thus conserves the redox energy in a proton gradient.</text>
</comment>
<comment type="catalytic activity">
    <reaction evidence="1">
        <text>a quinone + NADH + 5 H(+)(in) = a quinol + NAD(+) + 4 H(+)(out)</text>
        <dbReference type="Rhea" id="RHEA:57888"/>
        <dbReference type="ChEBI" id="CHEBI:15378"/>
        <dbReference type="ChEBI" id="CHEBI:24646"/>
        <dbReference type="ChEBI" id="CHEBI:57540"/>
        <dbReference type="ChEBI" id="CHEBI:57945"/>
        <dbReference type="ChEBI" id="CHEBI:132124"/>
    </reaction>
</comment>
<comment type="subunit">
    <text evidence="1">NDH-1 is composed of 13 different subunits. Subunits NuoA, H, J, K, L, M, N constitute the membrane sector of the complex.</text>
</comment>
<comment type="subcellular location">
    <subcellularLocation>
        <location evidence="1">Cell inner membrane</location>
        <topology evidence="1">Multi-pass membrane protein</topology>
    </subcellularLocation>
</comment>
<comment type="similarity">
    <text evidence="1">Belongs to the complex I subunit 3 family.</text>
</comment>